<sequence>MAVTRAAAPMVGNCSSAMLIIGRRYFSSPFTEKLRKTNRKKVIDLAAYPPKKIRNFGIVAHVDHGKSTLADRFLEMTGAVEKSSHASQMLDKLQVERERGITVKAQSCTMFHKDCMLNLIDTPGHADFSFEVARSLTATNGILLLVAANQGVQAQTVANFWLAFEAGLTIIPVINKVDLKSANVPRVVSQMENLFDFLPSEILYISAKNGTGIGDVLDAVVERLPPPKVEAHSPLRAHVFDSWYETHHGPVVCVAVHDGVISKGQRIRTYHSDCEYEVLVVGIMIPNMYEVKCLYAGQVGYLLTTMKSVQDAVIGETLYDVSDERNMVQPMPLITPTPPCIYASIYPTNINEYNALRVALYKLALNDSSVQIQHSNSTALGNGFKIGFSGHLHMEEYDANITITAPSVEYRAVIKDNQTILKKRYNGQRVIRLLDASDFPVCPSDIDHFLEPMIKLTLLLSTAYCEHVERLCVDARGEQVENNGLDTDCIMQQWRLPFAEVCMDFFDRLKRITSGYVTYNYQWDGFQKATIELLMIHINDLPIYEFSEIMPSNQIKARAKEIVKKLKEEIPRQQYEVRIKATLGQSKKALVQTVIAPVKKDFTGRLKGNFGGSGWERFCKKLSHQKKGKERMKQLGQVQIPKEAFINVLRR</sequence>
<evidence type="ECO:0000255" key="1">
    <source>
        <dbReference type="HAMAP-Rule" id="MF_03137"/>
    </source>
</evidence>
<evidence type="ECO:0000305" key="2"/>
<feature type="transit peptide" description="Mitochondrion" evidence="1">
    <location>
        <begin position="1"/>
        <end position="26"/>
    </location>
</feature>
<feature type="chain" id="PRO_0000402840" description="Translation factor GUF1 homolog, mitochondrial">
    <location>
        <begin position="27"/>
        <end position="651"/>
    </location>
</feature>
<feature type="domain" description="tr-type G">
    <location>
        <begin position="51"/>
        <end position="228"/>
    </location>
</feature>
<feature type="binding site" evidence="1">
    <location>
        <begin position="60"/>
        <end position="67"/>
    </location>
    <ligand>
        <name>GTP</name>
        <dbReference type="ChEBI" id="CHEBI:37565"/>
    </ligand>
</feature>
<feature type="binding site" evidence="1">
    <location>
        <begin position="121"/>
        <end position="125"/>
    </location>
    <ligand>
        <name>GTP</name>
        <dbReference type="ChEBI" id="CHEBI:37565"/>
    </ligand>
</feature>
<feature type="binding site" evidence="1">
    <location>
        <begin position="175"/>
        <end position="178"/>
    </location>
    <ligand>
        <name>GTP</name>
        <dbReference type="ChEBI" id="CHEBI:37565"/>
    </ligand>
</feature>
<name>GUF1_BRUMA</name>
<dbReference type="EC" id="3.6.5.-"/>
<dbReference type="EMBL" id="DS239429">
    <property type="protein sequence ID" value="EDP30052.1"/>
    <property type="molecule type" value="Genomic_DNA"/>
</dbReference>
<dbReference type="RefSeq" id="XP_001901372.1">
    <property type="nucleotide sequence ID" value="XM_001901337.1"/>
</dbReference>
<dbReference type="SMR" id="A8QCE7"/>
<dbReference type="FunCoup" id="A8QCE7">
    <property type="interactions" value="2156"/>
</dbReference>
<dbReference type="STRING" id="6279.A8QCE7"/>
<dbReference type="WormBase" id="Bm17651">
    <property type="protein sequence ID" value="BM43093"/>
    <property type="gene ID" value="WBGene00268793"/>
</dbReference>
<dbReference type="InParanoid" id="A8QCE7"/>
<dbReference type="Proteomes" id="UP000006672">
    <property type="component" value="Unassembled WGS sequence"/>
</dbReference>
<dbReference type="GO" id="GO:0005743">
    <property type="term" value="C:mitochondrial inner membrane"/>
    <property type="evidence" value="ECO:0007669"/>
    <property type="project" value="UniProtKB-SubCell"/>
</dbReference>
<dbReference type="GO" id="GO:0005759">
    <property type="term" value="C:mitochondrial matrix"/>
    <property type="evidence" value="ECO:0007669"/>
    <property type="project" value="UniProtKB-UniRule"/>
</dbReference>
<dbReference type="GO" id="GO:0005525">
    <property type="term" value="F:GTP binding"/>
    <property type="evidence" value="ECO:0007669"/>
    <property type="project" value="UniProtKB-UniRule"/>
</dbReference>
<dbReference type="GO" id="GO:0003924">
    <property type="term" value="F:GTPase activity"/>
    <property type="evidence" value="ECO:0007669"/>
    <property type="project" value="UniProtKB-UniRule"/>
</dbReference>
<dbReference type="GO" id="GO:0097177">
    <property type="term" value="F:mitochondrial ribosome binding"/>
    <property type="evidence" value="ECO:0007669"/>
    <property type="project" value="TreeGrafter"/>
</dbReference>
<dbReference type="GO" id="GO:0045727">
    <property type="term" value="P:positive regulation of translation"/>
    <property type="evidence" value="ECO:0007669"/>
    <property type="project" value="UniProtKB-UniRule"/>
</dbReference>
<dbReference type="GO" id="GO:0006412">
    <property type="term" value="P:translation"/>
    <property type="evidence" value="ECO:0007669"/>
    <property type="project" value="UniProtKB-KW"/>
</dbReference>
<dbReference type="CDD" id="cd03699">
    <property type="entry name" value="EF4_II"/>
    <property type="match status" value="1"/>
</dbReference>
<dbReference type="CDD" id="cd01890">
    <property type="entry name" value="LepA"/>
    <property type="match status" value="1"/>
</dbReference>
<dbReference type="FunFam" id="3.40.50.300:FF:000078">
    <property type="entry name" value="Elongation factor 4"/>
    <property type="match status" value="1"/>
</dbReference>
<dbReference type="FunFam" id="2.40.30.10:FF:000015">
    <property type="entry name" value="Translation factor GUF1, mitochondrial"/>
    <property type="match status" value="1"/>
</dbReference>
<dbReference type="Gene3D" id="3.30.70.240">
    <property type="match status" value="1"/>
</dbReference>
<dbReference type="Gene3D" id="3.30.70.2570">
    <property type="entry name" value="Elongation factor 4, C-terminal domain"/>
    <property type="match status" value="1"/>
</dbReference>
<dbReference type="Gene3D" id="3.30.70.870">
    <property type="entry name" value="Elongation Factor G (Translational Gtpase), domain 3"/>
    <property type="match status" value="1"/>
</dbReference>
<dbReference type="Gene3D" id="3.40.50.300">
    <property type="entry name" value="P-loop containing nucleotide triphosphate hydrolases"/>
    <property type="match status" value="1"/>
</dbReference>
<dbReference type="Gene3D" id="2.40.30.10">
    <property type="entry name" value="Translation factors"/>
    <property type="match status" value="1"/>
</dbReference>
<dbReference type="HAMAP" id="MF_00071">
    <property type="entry name" value="LepA"/>
    <property type="match status" value="1"/>
</dbReference>
<dbReference type="InterPro" id="IPR006297">
    <property type="entry name" value="EF-4"/>
</dbReference>
<dbReference type="InterPro" id="IPR035647">
    <property type="entry name" value="EFG_III/V"/>
</dbReference>
<dbReference type="InterPro" id="IPR000640">
    <property type="entry name" value="EFG_V-like"/>
</dbReference>
<dbReference type="InterPro" id="IPR031157">
    <property type="entry name" value="G_TR_CS"/>
</dbReference>
<dbReference type="InterPro" id="IPR038363">
    <property type="entry name" value="LepA_C_sf"/>
</dbReference>
<dbReference type="InterPro" id="IPR013842">
    <property type="entry name" value="LepA_CTD"/>
</dbReference>
<dbReference type="InterPro" id="IPR027417">
    <property type="entry name" value="P-loop_NTPase"/>
</dbReference>
<dbReference type="InterPro" id="IPR005225">
    <property type="entry name" value="Small_GTP-bd"/>
</dbReference>
<dbReference type="InterPro" id="IPR000795">
    <property type="entry name" value="T_Tr_GTP-bd_dom"/>
</dbReference>
<dbReference type="InterPro" id="IPR009000">
    <property type="entry name" value="Transl_B-barrel_sf"/>
</dbReference>
<dbReference type="NCBIfam" id="TIGR01393">
    <property type="entry name" value="lepA"/>
    <property type="match status" value="1"/>
</dbReference>
<dbReference type="NCBIfam" id="TIGR00231">
    <property type="entry name" value="small_GTP"/>
    <property type="match status" value="1"/>
</dbReference>
<dbReference type="PANTHER" id="PTHR43512:SF7">
    <property type="entry name" value="TRANSLATION FACTOR GUF1, MITOCHONDRIAL"/>
    <property type="match status" value="1"/>
</dbReference>
<dbReference type="PANTHER" id="PTHR43512">
    <property type="entry name" value="TRANSLATION FACTOR GUF1-RELATED"/>
    <property type="match status" value="1"/>
</dbReference>
<dbReference type="Pfam" id="PF00679">
    <property type="entry name" value="EFG_C"/>
    <property type="match status" value="1"/>
</dbReference>
<dbReference type="Pfam" id="PF00009">
    <property type="entry name" value="GTP_EFTU"/>
    <property type="match status" value="1"/>
</dbReference>
<dbReference type="Pfam" id="PF06421">
    <property type="entry name" value="LepA_C"/>
    <property type="match status" value="1"/>
</dbReference>
<dbReference type="PRINTS" id="PR00315">
    <property type="entry name" value="ELONGATNFCT"/>
</dbReference>
<dbReference type="SUPFAM" id="SSF54980">
    <property type="entry name" value="EF-G C-terminal domain-like"/>
    <property type="match status" value="2"/>
</dbReference>
<dbReference type="SUPFAM" id="SSF52540">
    <property type="entry name" value="P-loop containing nucleoside triphosphate hydrolases"/>
    <property type="match status" value="1"/>
</dbReference>
<dbReference type="SUPFAM" id="SSF50447">
    <property type="entry name" value="Translation proteins"/>
    <property type="match status" value="1"/>
</dbReference>
<dbReference type="PROSITE" id="PS00301">
    <property type="entry name" value="G_TR_1"/>
    <property type="match status" value="1"/>
</dbReference>
<dbReference type="PROSITE" id="PS51722">
    <property type="entry name" value="G_TR_2"/>
    <property type="match status" value="1"/>
</dbReference>
<organism>
    <name type="scientific">Brugia malayi</name>
    <name type="common">Filarial nematode worm</name>
    <dbReference type="NCBI Taxonomy" id="6279"/>
    <lineage>
        <taxon>Eukaryota</taxon>
        <taxon>Metazoa</taxon>
        <taxon>Ecdysozoa</taxon>
        <taxon>Nematoda</taxon>
        <taxon>Chromadorea</taxon>
        <taxon>Rhabditida</taxon>
        <taxon>Spirurina</taxon>
        <taxon>Spiruromorpha</taxon>
        <taxon>Filarioidea</taxon>
        <taxon>Onchocercidae</taxon>
        <taxon>Brugia</taxon>
    </lineage>
</organism>
<comment type="function">
    <text evidence="1">Promotes mitochondrial protein synthesis. May act as a fidelity factor of the translation reaction, by catalyzing a one-codon backward translocation of tRNAs on improperly translocated ribosomes. Binds to mitochondrial ribosomes in a GTP-dependent manner.</text>
</comment>
<comment type="catalytic activity">
    <reaction evidence="1">
        <text>GTP + H2O = GDP + phosphate + H(+)</text>
        <dbReference type="Rhea" id="RHEA:19669"/>
        <dbReference type="ChEBI" id="CHEBI:15377"/>
        <dbReference type="ChEBI" id="CHEBI:15378"/>
        <dbReference type="ChEBI" id="CHEBI:37565"/>
        <dbReference type="ChEBI" id="CHEBI:43474"/>
        <dbReference type="ChEBI" id="CHEBI:58189"/>
    </reaction>
</comment>
<comment type="subcellular location">
    <subcellularLocation>
        <location evidence="1">Mitochondrion inner membrane</location>
        <topology evidence="1">Peripheral membrane protein</topology>
        <orientation evidence="1">Matrix side</orientation>
    </subcellularLocation>
</comment>
<comment type="similarity">
    <text evidence="2">Belongs to the TRAFAC class translation factor GTPase superfamily. Classic translation factor GTPase family. LepA subfamily.</text>
</comment>
<keyword id="KW-0342">GTP-binding</keyword>
<keyword id="KW-0378">Hydrolase</keyword>
<keyword id="KW-0472">Membrane</keyword>
<keyword id="KW-0496">Mitochondrion</keyword>
<keyword id="KW-0999">Mitochondrion inner membrane</keyword>
<keyword id="KW-0547">Nucleotide-binding</keyword>
<keyword id="KW-0648">Protein biosynthesis</keyword>
<keyword id="KW-1185">Reference proteome</keyword>
<keyword id="KW-0809">Transit peptide</keyword>
<gene>
    <name type="ORF">Bm1_49530</name>
</gene>
<reference key="1">
    <citation type="journal article" date="2007" name="Science">
        <title>Draft genome of the filarial nematode parasite Brugia malayi.</title>
        <authorList>
            <person name="Ghedin E."/>
            <person name="Wang S."/>
            <person name="Spiro D."/>
            <person name="Caler E."/>
            <person name="Zhao Q."/>
            <person name="Crabtree J."/>
            <person name="Allen J.E."/>
            <person name="Delcher A.L."/>
            <person name="Guiliano D.B."/>
            <person name="Miranda-Saavedra D."/>
            <person name="Angiuoli S.V."/>
            <person name="Creasy T."/>
            <person name="Amedeo P."/>
            <person name="Haas B."/>
            <person name="El-Sayed N.M."/>
            <person name="Wortman J.R."/>
            <person name="Feldblyum T."/>
            <person name="Tallon L."/>
            <person name="Schatz M."/>
            <person name="Shumway M."/>
            <person name="Koo H."/>
            <person name="Salzberg S.L."/>
            <person name="Schobel S."/>
            <person name="Pertea M."/>
            <person name="Pop M."/>
            <person name="White O."/>
            <person name="Barton G.J."/>
            <person name="Carlow C.K.S."/>
            <person name="Crawford M.J."/>
            <person name="Daub J."/>
            <person name="Dimmic M.W."/>
            <person name="Estes C.F."/>
            <person name="Foster J.M."/>
            <person name="Ganatra M."/>
            <person name="Gregory W.F."/>
            <person name="Johnson N.M."/>
            <person name="Jin J."/>
            <person name="Komuniecki R."/>
            <person name="Korf I."/>
            <person name="Kumar S."/>
            <person name="Laney S."/>
            <person name="Li B.-W."/>
            <person name="Li W."/>
            <person name="Lindblom T.H."/>
            <person name="Lustigman S."/>
            <person name="Ma D."/>
            <person name="Maina C.V."/>
            <person name="Martin D.M."/>
            <person name="McCarter J.P."/>
            <person name="McReynolds L."/>
            <person name="Mitreva M."/>
            <person name="Nutman T.B."/>
            <person name="Parkinson J."/>
            <person name="Peregrin-Alvarez J.M."/>
            <person name="Poole C."/>
            <person name="Ren Q."/>
            <person name="Saunders L."/>
            <person name="Sluder A.E."/>
            <person name="Smith K."/>
            <person name="Stanke M."/>
            <person name="Unnasch T.R."/>
            <person name="Ware J."/>
            <person name="Wei A.D."/>
            <person name="Weil G."/>
            <person name="Williams D.J."/>
            <person name="Zhang Y."/>
            <person name="Williams S.A."/>
            <person name="Fraser-Liggett C."/>
            <person name="Slatko B."/>
            <person name="Blaxter M.L."/>
            <person name="Scott A.L."/>
        </authorList>
    </citation>
    <scope>NUCLEOTIDE SEQUENCE [LARGE SCALE GENOMIC DNA]</scope>
</reference>
<protein>
    <recommendedName>
        <fullName evidence="1">Translation factor GUF1 homolog, mitochondrial</fullName>
        <ecNumber>3.6.5.-</ecNumber>
    </recommendedName>
    <alternativeName>
        <fullName evidence="1">Elongation factor 4 homolog</fullName>
        <shortName evidence="1">EF-4</shortName>
    </alternativeName>
    <alternativeName>
        <fullName evidence="1">GTPase GUF1 homolog</fullName>
    </alternativeName>
    <alternativeName>
        <fullName evidence="1">Ribosomal back-translocase</fullName>
    </alternativeName>
</protein>
<accession>A8QCE7</accession>
<proteinExistence type="inferred from homology"/>